<gene>
    <name type="primary">Naaladl1</name>
    <name type="synonym">Gm964</name>
    <name type="synonym">Naaladasel</name>
</gene>
<reference key="1">
    <citation type="submission" date="2002-08" db="EMBL/GenBank/DDBJ databases">
        <authorList>
            <person name="Pearman C."/>
            <person name="Haakenson W."/>
        </authorList>
    </citation>
    <scope>NUCLEOTIDE SEQUENCE</scope>
    <source>
        <strain>C57BL/6J</strain>
    </source>
</reference>
<reference key="2">
    <citation type="journal article" date="2003" name="Nat. Rev. Genet.">
        <title>Human and mouse proteases: a comparative genomic approach.</title>
        <authorList>
            <person name="Puente X.S."/>
            <person name="Sanchez L.M."/>
            <person name="Overall C.M."/>
            <person name="Lopez-Otin C."/>
        </authorList>
    </citation>
    <scope>IDENTIFICATION</scope>
</reference>
<proteinExistence type="evidence at transcript level"/>
<name>NALDL_MOUSE</name>
<comment type="function">
    <text evidence="2">Aminopeptidase with broad substrate specificity. Has lower activity with substrates that have Asp or Glu in the P2' position, or Pro in the P3' position. Lacks activity with substrates that have both Pro in the P3' position and Asp or Glu in the P2' position. Lacks carboxypeptidase activity. Lacks dipeptidyl-peptidase IV type activity.</text>
</comment>
<comment type="cofactor">
    <cofactor evidence="2">
        <name>Zn(2+)</name>
        <dbReference type="ChEBI" id="CHEBI:29105"/>
    </cofactor>
    <text evidence="2">Binds 2 Zn(2+) ions per subunit.</text>
</comment>
<comment type="subunit">
    <text evidence="2">Homodimer.</text>
</comment>
<comment type="subcellular location">
    <subcellularLocation>
        <location evidence="1">Apical cell membrane</location>
        <topology evidence="1">Single-pass type II membrane protein</topology>
    </subcellularLocation>
    <text evidence="1">Ileal brush border membrane.</text>
</comment>
<comment type="PTM">
    <text evidence="1">N-glycosylated.</text>
</comment>
<comment type="similarity">
    <text evidence="4">Belongs to the peptidase M28 family. M28B subfamily.</text>
</comment>
<keyword id="KW-0031">Aminopeptidase</keyword>
<keyword id="KW-0106">Calcium</keyword>
<keyword id="KW-1003">Cell membrane</keyword>
<keyword id="KW-1015">Disulfide bond</keyword>
<keyword id="KW-0325">Glycoprotein</keyword>
<keyword id="KW-0378">Hydrolase</keyword>
<keyword id="KW-0472">Membrane</keyword>
<keyword id="KW-0479">Metal-binding</keyword>
<keyword id="KW-0482">Metalloprotease</keyword>
<keyword id="KW-0645">Protease</keyword>
<keyword id="KW-1185">Reference proteome</keyword>
<keyword id="KW-0735">Signal-anchor</keyword>
<keyword id="KW-0812">Transmembrane</keyword>
<keyword id="KW-1133">Transmembrane helix</keyword>
<keyword id="KW-0862">Zinc</keyword>
<accession>Q7M758</accession>
<sequence>MHWVKILGVALGAAALLGLGIILGHFAIPKATSPLTSSTSDSQDLDLAILDSVMGQLDASRIRENLRELSKEPHVATSPRDEALVQLLLGRWKDTATGLDSAKTYEYRVLLSFPNAEQPNSVEVVGPNGTTFHSFQPFEKNLTGEQAGPNVLQPYAAYAPPGTPKGLLVYANQGSEEDFKELETQGINLEGTIALTRYGGVGRGAKAINAAKHGVVGVLVYTDPGDINDGKSLPNETFPNSWRLPPSGVERGSYYEYFGDPLTPYLPAHPSSFRLDPHNTSGFPPIPTQPIGFEDARDLLCNLTGTSAPAFWQGALGCEYKLGPGFEPNGSFPAGSEVKVSVHNRLELRTSSNVLGIIQGAVEPDRYVIYGNHRDSWVHGAVDPSSGTAVLLEISRVLGTLLKKGTWRPRRSIIFASWGAEEFGLIGSTEFTEEFLSKLQERTVAYINVDISVFSNATLRAQGTPPVQSVIFSATKEISAPGSSGLSIYDNWIRYTNRTSPVYGLVPSLGTLGAGSDYAAFVHFLGITSMDLAYTYDRSKTSARIYPTYHTAFDTFDYVEKFLDPGFSSHQAVARTAGSVLLRLSDSLFLPLNVSDYSETLQSFLQAAQEALGTQLEKQNISLGPLVTAVANFKAAAASLGEHILTLQKSSPDPLQVRMVNDQLMLLERAFLNPRAFPEERHYSHVLWAPNTASVDTFPGLANAYAKAQEINSGSEAWAEVQRQLSIVVTALEGAAATLVPVADL</sequence>
<protein>
    <recommendedName>
        <fullName evidence="4">Aminopeptidase NAALADL1</fullName>
        <ecNumber evidence="2">3.4.11.-</ecNumber>
    </recommendedName>
    <alternativeName>
        <fullName>N-acetylated-alpha-linked acidic dipeptidase-like protein</fullName>
        <shortName>NAALADase L</shortName>
    </alternativeName>
</protein>
<organism>
    <name type="scientific">Mus musculus</name>
    <name type="common">Mouse</name>
    <dbReference type="NCBI Taxonomy" id="10090"/>
    <lineage>
        <taxon>Eukaryota</taxon>
        <taxon>Metazoa</taxon>
        <taxon>Chordata</taxon>
        <taxon>Craniata</taxon>
        <taxon>Vertebrata</taxon>
        <taxon>Euteleostomi</taxon>
        <taxon>Mammalia</taxon>
        <taxon>Eutheria</taxon>
        <taxon>Euarchontoglires</taxon>
        <taxon>Glires</taxon>
        <taxon>Rodentia</taxon>
        <taxon>Myomorpha</taxon>
        <taxon>Muroidea</taxon>
        <taxon>Muridae</taxon>
        <taxon>Murinae</taxon>
        <taxon>Mus</taxon>
        <taxon>Mus</taxon>
    </lineage>
</organism>
<dbReference type="EC" id="3.4.11.-" evidence="2"/>
<dbReference type="EMBL" id="AC131114">
    <property type="status" value="NOT_ANNOTATED_CDS"/>
    <property type="molecule type" value="Genomic_DNA"/>
</dbReference>
<dbReference type="EMBL" id="BN000129">
    <property type="protein sequence ID" value="CAD67582.1"/>
    <property type="molecule type" value="mRNA"/>
</dbReference>
<dbReference type="CCDS" id="CCDS29494.1"/>
<dbReference type="RefSeq" id="NP_001009546.1">
    <property type="nucleotide sequence ID" value="NM_001009546.2"/>
</dbReference>
<dbReference type="SMR" id="Q7M758"/>
<dbReference type="FunCoup" id="Q7M758">
    <property type="interactions" value="4"/>
</dbReference>
<dbReference type="IntAct" id="Q7M758">
    <property type="interactions" value="1"/>
</dbReference>
<dbReference type="STRING" id="10090.ENSMUSP00000044231"/>
<dbReference type="MEROPS" id="M28.011"/>
<dbReference type="GlyCosmos" id="Q7M758">
    <property type="glycosylation" value="10 sites, No reported glycans"/>
</dbReference>
<dbReference type="GlyGen" id="Q7M758">
    <property type="glycosylation" value="10 sites"/>
</dbReference>
<dbReference type="iPTMnet" id="Q7M758"/>
<dbReference type="PhosphoSitePlus" id="Q7M758"/>
<dbReference type="PaxDb" id="10090-ENSMUSP00000044231"/>
<dbReference type="PeptideAtlas" id="Q7M758"/>
<dbReference type="ProteomicsDB" id="287434"/>
<dbReference type="Antibodypedia" id="58724">
    <property type="antibodies" value="136 antibodies from 15 providers"/>
</dbReference>
<dbReference type="DNASU" id="381204"/>
<dbReference type="Ensembl" id="ENSMUST00000044451.4">
    <property type="protein sequence ID" value="ENSMUSP00000044231.4"/>
    <property type="gene ID" value="ENSMUSG00000054999.3"/>
</dbReference>
<dbReference type="GeneID" id="381204"/>
<dbReference type="KEGG" id="mmu:381204"/>
<dbReference type="UCSC" id="uc008ghk.1">
    <property type="organism name" value="mouse"/>
</dbReference>
<dbReference type="AGR" id="MGI:2685810"/>
<dbReference type="CTD" id="10004"/>
<dbReference type="MGI" id="MGI:2685810">
    <property type="gene designation" value="Naaladl1"/>
</dbReference>
<dbReference type="VEuPathDB" id="HostDB:ENSMUSG00000054999"/>
<dbReference type="eggNOG" id="KOG2195">
    <property type="taxonomic scope" value="Eukaryota"/>
</dbReference>
<dbReference type="GeneTree" id="ENSGT01030000234598"/>
<dbReference type="HOGENOM" id="CLU_005688_3_2_1"/>
<dbReference type="InParanoid" id="Q7M758"/>
<dbReference type="OMA" id="YPRKDGR"/>
<dbReference type="OrthoDB" id="5841748at2759"/>
<dbReference type="PhylomeDB" id="Q7M758"/>
<dbReference type="TreeFam" id="TF312981"/>
<dbReference type="BioGRID-ORCS" id="381204">
    <property type="hits" value="4 hits in 76 CRISPR screens"/>
</dbReference>
<dbReference type="PRO" id="PR:Q7M758"/>
<dbReference type="Proteomes" id="UP000000589">
    <property type="component" value="Chromosome 19"/>
</dbReference>
<dbReference type="RNAct" id="Q7M758">
    <property type="molecule type" value="protein"/>
</dbReference>
<dbReference type="Bgee" id="ENSMUSG00000054999">
    <property type="expression patterns" value="Expressed in ileum and 49 other cell types or tissues"/>
</dbReference>
<dbReference type="GO" id="GO:0016324">
    <property type="term" value="C:apical plasma membrane"/>
    <property type="evidence" value="ECO:0000250"/>
    <property type="project" value="UniProtKB"/>
</dbReference>
<dbReference type="GO" id="GO:0016020">
    <property type="term" value="C:membrane"/>
    <property type="evidence" value="ECO:0000250"/>
    <property type="project" value="UniProtKB"/>
</dbReference>
<dbReference type="GO" id="GO:0004177">
    <property type="term" value="F:aminopeptidase activity"/>
    <property type="evidence" value="ECO:0000250"/>
    <property type="project" value="UniProtKB"/>
</dbReference>
<dbReference type="GO" id="GO:0005509">
    <property type="term" value="F:calcium ion binding"/>
    <property type="evidence" value="ECO:0000250"/>
    <property type="project" value="UniProtKB"/>
</dbReference>
<dbReference type="GO" id="GO:0008237">
    <property type="term" value="F:metallopeptidase activity"/>
    <property type="evidence" value="ECO:0007669"/>
    <property type="project" value="UniProtKB-KW"/>
</dbReference>
<dbReference type="GO" id="GO:0042803">
    <property type="term" value="F:protein homodimerization activity"/>
    <property type="evidence" value="ECO:0000250"/>
    <property type="project" value="UniProtKB"/>
</dbReference>
<dbReference type="GO" id="GO:0008270">
    <property type="term" value="F:zinc ion binding"/>
    <property type="evidence" value="ECO:0000250"/>
    <property type="project" value="UniProtKB"/>
</dbReference>
<dbReference type="GO" id="GO:0043171">
    <property type="term" value="P:peptide catabolic process"/>
    <property type="evidence" value="ECO:0000250"/>
    <property type="project" value="UniProtKB"/>
</dbReference>
<dbReference type="GO" id="GO:0006508">
    <property type="term" value="P:proteolysis"/>
    <property type="evidence" value="ECO:0007669"/>
    <property type="project" value="UniProtKB-KW"/>
</dbReference>
<dbReference type="CDD" id="cd08022">
    <property type="entry name" value="M28_PSMA_like"/>
    <property type="match status" value="1"/>
</dbReference>
<dbReference type="CDD" id="cd02121">
    <property type="entry name" value="PA_GCPII_like"/>
    <property type="match status" value="1"/>
</dbReference>
<dbReference type="FunFam" id="3.40.630.10:FF:000101">
    <property type="entry name" value="N-acetylated alpha-linked acidic dipeptidase like 1"/>
    <property type="match status" value="2"/>
</dbReference>
<dbReference type="FunFam" id="3.50.30.30:FF:000021">
    <property type="entry name" value="N-acetylated alpha-linked acidic dipeptidase-like 1"/>
    <property type="match status" value="1"/>
</dbReference>
<dbReference type="FunFam" id="1.20.930.40:FF:000001">
    <property type="entry name" value="N-acetylated-alpha-linked acidic dipeptidase 2"/>
    <property type="match status" value="1"/>
</dbReference>
<dbReference type="Gene3D" id="3.50.30.30">
    <property type="match status" value="1"/>
</dbReference>
<dbReference type="Gene3D" id="1.20.930.40">
    <property type="entry name" value="Transferrin receptor-like, dimerisation domain"/>
    <property type="match status" value="1"/>
</dbReference>
<dbReference type="Gene3D" id="3.40.630.10">
    <property type="entry name" value="Zn peptidases"/>
    <property type="match status" value="1"/>
</dbReference>
<dbReference type="InterPro" id="IPR046450">
    <property type="entry name" value="PA_dom_sf"/>
</dbReference>
<dbReference type="InterPro" id="IPR003137">
    <property type="entry name" value="PA_domain"/>
</dbReference>
<dbReference type="InterPro" id="IPR007484">
    <property type="entry name" value="Peptidase_M28"/>
</dbReference>
<dbReference type="InterPro" id="IPR039373">
    <property type="entry name" value="Peptidase_M28B"/>
</dbReference>
<dbReference type="InterPro" id="IPR007365">
    <property type="entry name" value="TFR-like_dimer_dom"/>
</dbReference>
<dbReference type="InterPro" id="IPR036757">
    <property type="entry name" value="TFR-like_dimer_dom_sf"/>
</dbReference>
<dbReference type="PANTHER" id="PTHR10404:SF50">
    <property type="entry name" value="AMINOPEPTIDASE NAALADL1"/>
    <property type="match status" value="1"/>
</dbReference>
<dbReference type="PANTHER" id="PTHR10404">
    <property type="entry name" value="N-ACETYLATED-ALPHA-LINKED ACIDIC DIPEPTIDASE"/>
    <property type="match status" value="1"/>
</dbReference>
<dbReference type="Pfam" id="PF02225">
    <property type="entry name" value="PA"/>
    <property type="match status" value="1"/>
</dbReference>
<dbReference type="Pfam" id="PF04389">
    <property type="entry name" value="Peptidase_M28"/>
    <property type="match status" value="1"/>
</dbReference>
<dbReference type="Pfam" id="PF04253">
    <property type="entry name" value="TFR_dimer"/>
    <property type="match status" value="1"/>
</dbReference>
<dbReference type="SUPFAM" id="SSF52025">
    <property type="entry name" value="PA domain"/>
    <property type="match status" value="1"/>
</dbReference>
<dbReference type="SUPFAM" id="SSF47672">
    <property type="entry name" value="Transferrin receptor-like dimerisation domain"/>
    <property type="match status" value="1"/>
</dbReference>
<dbReference type="SUPFAM" id="SSF53187">
    <property type="entry name" value="Zn-dependent exopeptidases"/>
    <property type="match status" value="1"/>
</dbReference>
<evidence type="ECO:0000250" key="1">
    <source>
        <dbReference type="UniProtKB" id="O54697"/>
    </source>
</evidence>
<evidence type="ECO:0000250" key="2">
    <source>
        <dbReference type="UniProtKB" id="Q9UQQ1"/>
    </source>
</evidence>
<evidence type="ECO:0000255" key="3"/>
<evidence type="ECO:0000305" key="4"/>
<feature type="chain" id="PRO_0000174124" description="Aminopeptidase NAALADL1">
    <location>
        <begin position="1"/>
        <end position="745"/>
    </location>
</feature>
<feature type="topological domain" description="Cytoplasmic" evidence="3">
    <location>
        <begin position="1"/>
        <end position="6"/>
    </location>
</feature>
<feature type="transmembrane region" description="Helical; Signal-anchor for type II membrane protein" evidence="3">
    <location>
        <begin position="7"/>
        <end position="28"/>
    </location>
</feature>
<feature type="topological domain" description="Extracellular" evidence="3">
    <location>
        <begin position="29"/>
        <end position="745"/>
    </location>
</feature>
<feature type="active site" description="Proton donor/acceptor" evidence="2">
    <location>
        <position position="421"/>
    </location>
</feature>
<feature type="binding site" evidence="2">
    <location>
        <position position="263"/>
    </location>
    <ligand>
        <name>Ca(2+)</name>
        <dbReference type="ChEBI" id="CHEBI:29108"/>
    </ligand>
</feature>
<feature type="binding site" evidence="2">
    <location>
        <position position="266"/>
    </location>
    <ligand>
        <name>Ca(2+)</name>
        <dbReference type="ChEBI" id="CHEBI:29108"/>
    </ligand>
</feature>
<feature type="binding site" evidence="2">
    <location>
        <position position="373"/>
    </location>
    <ligand>
        <name>Zn(2+)</name>
        <dbReference type="ChEBI" id="CHEBI:29105"/>
        <label>1</label>
    </ligand>
</feature>
<feature type="binding site" evidence="2">
    <location>
        <position position="383"/>
    </location>
    <ligand>
        <name>Zn(2+)</name>
        <dbReference type="ChEBI" id="CHEBI:29105"/>
        <label>1</label>
    </ligand>
</feature>
<feature type="binding site" evidence="2">
    <location>
        <position position="383"/>
    </location>
    <ligand>
        <name>Zn(2+)</name>
        <dbReference type="ChEBI" id="CHEBI:29105"/>
        <label>2</label>
    </ligand>
</feature>
<feature type="binding site" evidence="2">
    <location>
        <position position="422"/>
    </location>
    <ligand>
        <name>Zn(2+)</name>
        <dbReference type="ChEBI" id="CHEBI:29105"/>
        <label>2</label>
    </ligand>
</feature>
<feature type="binding site" evidence="2">
    <location>
        <position position="430"/>
    </location>
    <ligand>
        <name>Ca(2+)</name>
        <dbReference type="ChEBI" id="CHEBI:29108"/>
    </ligand>
</feature>
<feature type="binding site" evidence="2">
    <location>
        <position position="433"/>
    </location>
    <ligand>
        <name>Ca(2+)</name>
        <dbReference type="ChEBI" id="CHEBI:29108"/>
    </ligand>
</feature>
<feature type="binding site" evidence="2">
    <location>
        <position position="450"/>
    </location>
    <ligand>
        <name>Zn(2+)</name>
        <dbReference type="ChEBI" id="CHEBI:29105"/>
        <label>1</label>
    </ligand>
</feature>
<feature type="binding site" evidence="2">
    <location>
        <position position="550"/>
    </location>
    <ligand>
        <name>Zn(2+)</name>
        <dbReference type="ChEBI" id="CHEBI:29105"/>
        <label>2</label>
    </ligand>
</feature>
<feature type="glycosylation site" description="N-linked (GlcNAc...) asparagine" evidence="3">
    <location>
        <position position="128"/>
    </location>
</feature>
<feature type="glycosylation site" description="N-linked (GlcNAc...) asparagine" evidence="3">
    <location>
        <position position="141"/>
    </location>
</feature>
<feature type="glycosylation site" description="N-linked (GlcNAc...) asparagine" evidence="3">
    <location>
        <position position="235"/>
    </location>
</feature>
<feature type="glycosylation site" description="N-linked (GlcNAc...) asparagine" evidence="3">
    <location>
        <position position="279"/>
    </location>
</feature>
<feature type="glycosylation site" description="N-linked (GlcNAc...) asparagine" evidence="3">
    <location>
        <position position="302"/>
    </location>
</feature>
<feature type="glycosylation site" description="N-linked (GlcNAc...) asparagine" evidence="3">
    <location>
        <position position="329"/>
    </location>
</feature>
<feature type="glycosylation site" description="N-linked (GlcNAc...) asparagine" evidence="3">
    <location>
        <position position="456"/>
    </location>
</feature>
<feature type="glycosylation site" description="N-linked (GlcNAc...) asparagine" evidence="3">
    <location>
        <position position="497"/>
    </location>
</feature>
<feature type="glycosylation site" description="N-linked (GlcNAc...) asparagine" evidence="3">
    <location>
        <position position="593"/>
    </location>
</feature>
<feature type="glycosylation site" description="N-linked (GlcNAc...) asparagine" evidence="3">
    <location>
        <position position="620"/>
    </location>
</feature>
<feature type="disulfide bond" evidence="2">
    <location>
        <begin position="301"/>
        <end position="318"/>
    </location>
</feature>